<organism>
    <name type="scientific">Bacillus subtilis (strain 168)</name>
    <dbReference type="NCBI Taxonomy" id="224308"/>
    <lineage>
        <taxon>Bacteria</taxon>
        <taxon>Bacillati</taxon>
        <taxon>Bacillota</taxon>
        <taxon>Bacilli</taxon>
        <taxon>Bacillales</taxon>
        <taxon>Bacillaceae</taxon>
        <taxon>Bacillus</taxon>
    </lineage>
</organism>
<reference key="1">
    <citation type="journal article" date="1997" name="Nature">
        <title>The complete genome sequence of the Gram-positive bacterium Bacillus subtilis.</title>
        <authorList>
            <person name="Kunst F."/>
            <person name="Ogasawara N."/>
            <person name="Moszer I."/>
            <person name="Albertini A.M."/>
            <person name="Alloni G."/>
            <person name="Azevedo V."/>
            <person name="Bertero M.G."/>
            <person name="Bessieres P."/>
            <person name="Bolotin A."/>
            <person name="Borchert S."/>
            <person name="Borriss R."/>
            <person name="Boursier L."/>
            <person name="Brans A."/>
            <person name="Braun M."/>
            <person name="Brignell S.C."/>
            <person name="Bron S."/>
            <person name="Brouillet S."/>
            <person name="Bruschi C.V."/>
            <person name="Caldwell B."/>
            <person name="Capuano V."/>
            <person name="Carter N.M."/>
            <person name="Choi S.-K."/>
            <person name="Codani J.-J."/>
            <person name="Connerton I.F."/>
            <person name="Cummings N.J."/>
            <person name="Daniel R.A."/>
            <person name="Denizot F."/>
            <person name="Devine K.M."/>
            <person name="Duesterhoeft A."/>
            <person name="Ehrlich S.D."/>
            <person name="Emmerson P.T."/>
            <person name="Entian K.-D."/>
            <person name="Errington J."/>
            <person name="Fabret C."/>
            <person name="Ferrari E."/>
            <person name="Foulger D."/>
            <person name="Fritz C."/>
            <person name="Fujita M."/>
            <person name="Fujita Y."/>
            <person name="Fuma S."/>
            <person name="Galizzi A."/>
            <person name="Galleron N."/>
            <person name="Ghim S.-Y."/>
            <person name="Glaser P."/>
            <person name="Goffeau A."/>
            <person name="Golightly E.J."/>
            <person name="Grandi G."/>
            <person name="Guiseppi G."/>
            <person name="Guy B.J."/>
            <person name="Haga K."/>
            <person name="Haiech J."/>
            <person name="Harwood C.R."/>
            <person name="Henaut A."/>
            <person name="Hilbert H."/>
            <person name="Holsappel S."/>
            <person name="Hosono S."/>
            <person name="Hullo M.-F."/>
            <person name="Itaya M."/>
            <person name="Jones L.-M."/>
            <person name="Joris B."/>
            <person name="Karamata D."/>
            <person name="Kasahara Y."/>
            <person name="Klaerr-Blanchard M."/>
            <person name="Klein C."/>
            <person name="Kobayashi Y."/>
            <person name="Koetter P."/>
            <person name="Koningstein G."/>
            <person name="Krogh S."/>
            <person name="Kumano M."/>
            <person name="Kurita K."/>
            <person name="Lapidus A."/>
            <person name="Lardinois S."/>
            <person name="Lauber J."/>
            <person name="Lazarevic V."/>
            <person name="Lee S.-M."/>
            <person name="Levine A."/>
            <person name="Liu H."/>
            <person name="Masuda S."/>
            <person name="Mauel C."/>
            <person name="Medigue C."/>
            <person name="Medina N."/>
            <person name="Mellado R.P."/>
            <person name="Mizuno M."/>
            <person name="Moestl D."/>
            <person name="Nakai S."/>
            <person name="Noback M."/>
            <person name="Noone D."/>
            <person name="O'Reilly M."/>
            <person name="Ogawa K."/>
            <person name="Ogiwara A."/>
            <person name="Oudega B."/>
            <person name="Park S.-H."/>
            <person name="Parro V."/>
            <person name="Pohl T.M."/>
            <person name="Portetelle D."/>
            <person name="Porwollik S."/>
            <person name="Prescott A.M."/>
            <person name="Presecan E."/>
            <person name="Pujic P."/>
            <person name="Purnelle B."/>
            <person name="Rapoport G."/>
            <person name="Rey M."/>
            <person name="Reynolds S."/>
            <person name="Rieger M."/>
            <person name="Rivolta C."/>
            <person name="Rocha E."/>
            <person name="Roche B."/>
            <person name="Rose M."/>
            <person name="Sadaie Y."/>
            <person name="Sato T."/>
            <person name="Scanlan E."/>
            <person name="Schleich S."/>
            <person name="Schroeter R."/>
            <person name="Scoffone F."/>
            <person name="Sekiguchi J."/>
            <person name="Sekowska A."/>
            <person name="Seror S.J."/>
            <person name="Serror P."/>
            <person name="Shin B.-S."/>
            <person name="Soldo B."/>
            <person name="Sorokin A."/>
            <person name="Tacconi E."/>
            <person name="Takagi T."/>
            <person name="Takahashi H."/>
            <person name="Takemaru K."/>
            <person name="Takeuchi M."/>
            <person name="Tamakoshi A."/>
            <person name="Tanaka T."/>
            <person name="Terpstra P."/>
            <person name="Tognoni A."/>
            <person name="Tosato V."/>
            <person name="Uchiyama S."/>
            <person name="Vandenbol M."/>
            <person name="Vannier F."/>
            <person name="Vassarotti A."/>
            <person name="Viari A."/>
            <person name="Wambutt R."/>
            <person name="Wedler E."/>
            <person name="Wedler H."/>
            <person name="Weitzenegger T."/>
            <person name="Winters P."/>
            <person name="Wipat A."/>
            <person name="Yamamoto H."/>
            <person name="Yamane K."/>
            <person name="Yasumoto K."/>
            <person name="Yata K."/>
            <person name="Yoshida K."/>
            <person name="Yoshikawa H.-F."/>
            <person name="Zumstein E."/>
            <person name="Yoshikawa H."/>
            <person name="Danchin A."/>
        </authorList>
    </citation>
    <scope>NUCLEOTIDE SEQUENCE [LARGE SCALE GENOMIC DNA]</scope>
    <source>
        <strain>168</strain>
    </source>
</reference>
<name>YOSH_BACSU</name>
<keyword id="KW-1185">Reference proteome</keyword>
<gene>
    <name type="primary">yosH</name>
    <name type="ordered locus">BSU20120</name>
</gene>
<feature type="chain" id="PRO_0000375825" description="SPbeta prophage-derived uncharacterized protein YosH">
    <location>
        <begin position="1"/>
        <end position="156"/>
    </location>
</feature>
<dbReference type="EMBL" id="AL009126">
    <property type="protein sequence ID" value="CAB13904.1"/>
    <property type="molecule type" value="Genomic_DNA"/>
</dbReference>
<dbReference type="RefSeq" id="NP_389894.1">
    <property type="nucleotide sequence ID" value="NC_000964.3"/>
</dbReference>
<dbReference type="RefSeq" id="WP_004399315.1">
    <property type="nucleotide sequence ID" value="NZ_OZ025638.1"/>
</dbReference>
<dbReference type="FunCoup" id="O31881">
    <property type="interactions" value="51"/>
</dbReference>
<dbReference type="STRING" id="224308.BSU20120"/>
<dbReference type="PaxDb" id="224308-BSU20120"/>
<dbReference type="EnsemblBacteria" id="CAB13904">
    <property type="protein sequence ID" value="CAB13904"/>
    <property type="gene ID" value="BSU_20120"/>
</dbReference>
<dbReference type="GeneID" id="939551"/>
<dbReference type="KEGG" id="bsu:BSU20120"/>
<dbReference type="PATRIC" id="fig|224308.179.peg.2202"/>
<dbReference type="InParanoid" id="O31881"/>
<dbReference type="OrthoDB" id="2922990at2"/>
<dbReference type="BioCyc" id="BSUB:BSU20120-MONOMER"/>
<dbReference type="Proteomes" id="UP000001570">
    <property type="component" value="Chromosome"/>
</dbReference>
<sequence>MGIKAAVFEIKATCYAHEGFNDESPSVQGAALEQLGKDMVDHLLENGVDDVKIKGDYVEELEVEKPIMKYFEVFDPYYALIKAYTKEKAMELYTDTVTDDDDGELSDEMTEVGQVYAAIQHGRAPGEDKELMPFKQVLEEISNDEEMVLLIDGSLL</sequence>
<accession>O31881</accession>
<protein>
    <recommendedName>
        <fullName>SPbeta prophage-derived uncharacterized protein YosH</fullName>
    </recommendedName>
</protein>
<proteinExistence type="predicted"/>